<organism>
    <name type="scientific">Cucumis sativus</name>
    <name type="common">Cucumber</name>
    <dbReference type="NCBI Taxonomy" id="3659"/>
    <lineage>
        <taxon>Eukaryota</taxon>
        <taxon>Viridiplantae</taxon>
        <taxon>Streptophyta</taxon>
        <taxon>Embryophyta</taxon>
        <taxon>Tracheophyta</taxon>
        <taxon>Spermatophyta</taxon>
        <taxon>Magnoliopsida</taxon>
        <taxon>eudicotyledons</taxon>
        <taxon>Gunneridae</taxon>
        <taxon>Pentapetalae</taxon>
        <taxon>rosids</taxon>
        <taxon>fabids</taxon>
        <taxon>Cucurbitales</taxon>
        <taxon>Cucurbitaceae</taxon>
        <taxon>Benincaseae</taxon>
        <taxon>Cucumis</taxon>
    </lineage>
</organism>
<keyword id="KW-0150">Chloroplast</keyword>
<keyword id="KW-0472">Membrane</keyword>
<keyword id="KW-0602">Photosynthesis</keyword>
<keyword id="KW-0604">Photosystem II</keyword>
<keyword id="KW-0934">Plastid</keyword>
<keyword id="KW-0674">Reaction center</keyword>
<keyword id="KW-0793">Thylakoid</keyword>
<keyword id="KW-0812">Transmembrane</keyword>
<keyword id="KW-1133">Transmembrane helix</keyword>
<sequence>MTIAFQLAVFALIVTSSILLISVPVVFASPDGWSGNKNVVFSGTSLWIGLVFLVGILNSLIS</sequence>
<accession>Q4VZN6</accession>
<accession>A5J1T1</accession>
<reference key="1">
    <citation type="journal article" date="2006" name="Plant Cell Rep.">
        <title>Complete sequence and organization of the cucumber (Cucumis sativus L. cv. Baekmibaekdadagi) chloroplast genome.</title>
        <authorList>
            <person name="Kim J.-S."/>
            <person name="Jung J.D."/>
            <person name="Lee J.-A."/>
            <person name="Park H.-W."/>
            <person name="Oh K.-H."/>
            <person name="Jeong W.J."/>
            <person name="Choi D.-W."/>
            <person name="Liu J.R."/>
            <person name="Cho K.Y."/>
        </authorList>
    </citation>
    <scope>NUCLEOTIDE SEQUENCE [LARGE SCALE GENOMIC DNA]</scope>
    <source>
        <strain>cv. Baekmibaekdadagi</strain>
    </source>
</reference>
<reference key="2">
    <citation type="journal article" date="2007" name="Cell. Mol. Biol. Lett.">
        <title>The complete structure of the cucumber (Cucumis sativus L.) chloroplast genome: its composition and comparative analysis.</title>
        <authorList>
            <person name="Plader W.W."/>
            <person name="Yukawa Y."/>
            <person name="Sugiura M."/>
            <person name="Malepszy S."/>
        </authorList>
    </citation>
    <scope>NUCLEOTIDE SEQUENCE [LARGE SCALE GENOMIC DNA]</scope>
    <source>
        <strain>cv. Borszczagowski</strain>
    </source>
</reference>
<reference key="3">
    <citation type="journal article" date="2007" name="Genome">
        <title>Sequencing cucumber (Cucumis sativus L.) chloroplast genomes identifies differences between chilling-tolerant and -susceptible cucumber lines.</title>
        <authorList>
            <person name="Chung S.-M."/>
            <person name="Gordon V.S."/>
            <person name="Staub J.E."/>
        </authorList>
    </citation>
    <scope>NUCLEOTIDE SEQUENCE [LARGE SCALE GENOMIC DNA]</scope>
    <source>
        <strain>cv. Chipper</strain>
        <strain>cv. Gy14</strain>
    </source>
</reference>
<evidence type="ECO:0000255" key="1">
    <source>
        <dbReference type="HAMAP-Rule" id="MF_00644"/>
    </source>
</evidence>
<name>PSBZ_CUCSA</name>
<geneLocation type="chloroplast"/>
<feature type="chain" id="PRO_0000277213" description="Photosystem II reaction center protein Z">
    <location>
        <begin position="1"/>
        <end position="62"/>
    </location>
</feature>
<feature type="transmembrane region" description="Helical" evidence="1">
    <location>
        <begin position="8"/>
        <end position="28"/>
    </location>
</feature>
<feature type="transmembrane region" description="Helical" evidence="1">
    <location>
        <begin position="41"/>
        <end position="61"/>
    </location>
</feature>
<comment type="function">
    <text evidence="1">May control the interaction of photosystem II (PSII) cores with the light-harvesting antenna, regulates electron flow through the 2 photosystem reaction centers. PSII is a light-driven water plastoquinone oxidoreductase, using light energy to abstract electrons from H(2)O, generating a proton gradient subsequently used for ATP formation.</text>
</comment>
<comment type="subunit">
    <text evidence="1">PSII is composed of 1 copy each of membrane proteins PsbA, PsbB, PsbC, PsbD, PsbE, PsbF, PsbH, PsbI, PsbJ, PsbK, PsbL, PsbM, PsbT, PsbY, PsbZ, Psb30/Ycf12, at least 3 peripheral proteins of the oxygen-evolving complex and a large number of cofactors. It forms dimeric complexes.</text>
</comment>
<comment type="subcellular location">
    <subcellularLocation>
        <location evidence="1">Plastid</location>
        <location evidence="1">Chloroplast thylakoid membrane</location>
        <topology evidence="1">Multi-pass membrane protein</topology>
    </subcellularLocation>
</comment>
<comment type="similarity">
    <text evidence="1">Belongs to the PsbZ family.</text>
</comment>
<dbReference type="EMBL" id="DQ119058">
    <property type="protein sequence ID" value="AAZ94648.1"/>
    <property type="molecule type" value="Genomic_DNA"/>
</dbReference>
<dbReference type="EMBL" id="AJ970307">
    <property type="protein sequence ID" value="CAJ00755.1"/>
    <property type="molecule type" value="Genomic_DNA"/>
</dbReference>
<dbReference type="EMBL" id="DQ865975">
    <property type="protein sequence ID" value="ABI97414.1"/>
    <property type="molecule type" value="Genomic_DNA"/>
</dbReference>
<dbReference type="EMBL" id="DQ865976">
    <property type="protein sequence ID" value="ABI98743.1"/>
    <property type="molecule type" value="Genomic_DNA"/>
</dbReference>
<dbReference type="RefSeq" id="YP_247596.1">
    <property type="nucleotide sequence ID" value="NC_007144.1"/>
</dbReference>
<dbReference type="SMR" id="Q4VZN6"/>
<dbReference type="GeneID" id="3429364"/>
<dbReference type="KEGG" id="csv:3429364"/>
<dbReference type="eggNOG" id="ENOG502S7KE">
    <property type="taxonomic scope" value="Eukaryota"/>
</dbReference>
<dbReference type="OrthoDB" id="1161947at2759"/>
<dbReference type="GO" id="GO:0009535">
    <property type="term" value="C:chloroplast thylakoid membrane"/>
    <property type="evidence" value="ECO:0007669"/>
    <property type="project" value="UniProtKB-SubCell"/>
</dbReference>
<dbReference type="GO" id="GO:0009539">
    <property type="term" value="C:photosystem II reaction center"/>
    <property type="evidence" value="ECO:0007669"/>
    <property type="project" value="InterPro"/>
</dbReference>
<dbReference type="GO" id="GO:0015979">
    <property type="term" value="P:photosynthesis"/>
    <property type="evidence" value="ECO:0007669"/>
    <property type="project" value="UniProtKB-UniRule"/>
</dbReference>
<dbReference type="GO" id="GO:0042549">
    <property type="term" value="P:photosystem II stabilization"/>
    <property type="evidence" value="ECO:0007669"/>
    <property type="project" value="InterPro"/>
</dbReference>
<dbReference type="FunFam" id="1.10.287.740:FF:000001">
    <property type="entry name" value="Photosystem II reaction center protein Z"/>
    <property type="match status" value="1"/>
</dbReference>
<dbReference type="Gene3D" id="1.10.287.740">
    <property type="entry name" value="Photosystem II PsbZ, reaction centre"/>
    <property type="match status" value="1"/>
</dbReference>
<dbReference type="HAMAP" id="MF_00644">
    <property type="entry name" value="PSII_PsbZ"/>
    <property type="match status" value="1"/>
</dbReference>
<dbReference type="InterPro" id="IPR002644">
    <property type="entry name" value="PSII_PsbZ"/>
</dbReference>
<dbReference type="InterPro" id="IPR036512">
    <property type="entry name" value="PSII_PsbZ_sf"/>
</dbReference>
<dbReference type="NCBIfam" id="TIGR03043">
    <property type="entry name" value="PS_II_psbZ"/>
    <property type="match status" value="1"/>
</dbReference>
<dbReference type="PANTHER" id="PTHR34971">
    <property type="entry name" value="PHOTOSYSTEM II REACTION CENTER PROTEIN Z"/>
    <property type="match status" value="1"/>
</dbReference>
<dbReference type="PANTHER" id="PTHR34971:SF2">
    <property type="entry name" value="PHOTOSYSTEM II REACTION CENTER PROTEIN Z"/>
    <property type="match status" value="1"/>
</dbReference>
<dbReference type="Pfam" id="PF01737">
    <property type="entry name" value="Ycf9"/>
    <property type="match status" value="1"/>
</dbReference>
<dbReference type="SUPFAM" id="SSF161055">
    <property type="entry name" value="PsbZ-like"/>
    <property type="match status" value="1"/>
</dbReference>
<protein>
    <recommendedName>
        <fullName evidence="1">Photosystem II reaction center protein Z</fullName>
        <shortName evidence="1">PSII-Z</shortName>
    </recommendedName>
</protein>
<proteinExistence type="inferred from homology"/>
<gene>
    <name evidence="1" type="primary">psbZ</name>
    <name type="ordered locus">CsCp029</name>
</gene>